<name>RS5_BRUA4</name>
<comment type="function">
    <text evidence="1">With S4 and S12 plays an important role in translational accuracy.</text>
</comment>
<comment type="function">
    <text evidence="1">Located at the back of the 30S subunit body where it stabilizes the conformation of the head with respect to the body.</text>
</comment>
<comment type="subunit">
    <text evidence="1">Part of the 30S ribosomal subunit. Contacts proteins S4 and S8.</text>
</comment>
<comment type="domain">
    <text>The N-terminal domain interacts with the head of the 30S subunit; the C-terminal domain interacts with the body and contacts protein S4. The interaction surface between S4 and S5 is involved in control of translational fidelity.</text>
</comment>
<comment type="similarity">
    <text evidence="1">Belongs to the universal ribosomal protein uS5 family.</text>
</comment>
<proteinExistence type="inferred from homology"/>
<evidence type="ECO:0000255" key="1">
    <source>
        <dbReference type="HAMAP-Rule" id="MF_01307"/>
    </source>
</evidence>
<evidence type="ECO:0000305" key="2"/>
<accession>A6X0D5</accession>
<dbReference type="EMBL" id="CP000758">
    <property type="protein sequence ID" value="ABS14689.1"/>
    <property type="molecule type" value="Genomic_DNA"/>
</dbReference>
<dbReference type="RefSeq" id="WP_006467009.1">
    <property type="nucleotide sequence ID" value="NC_009667.1"/>
</dbReference>
<dbReference type="SMR" id="A6X0D5"/>
<dbReference type="STRING" id="439375.Oant_1973"/>
<dbReference type="GeneID" id="61317569"/>
<dbReference type="KEGG" id="oan:Oant_1973"/>
<dbReference type="eggNOG" id="COG0098">
    <property type="taxonomic scope" value="Bacteria"/>
</dbReference>
<dbReference type="HOGENOM" id="CLU_065898_2_2_5"/>
<dbReference type="PhylomeDB" id="A6X0D5"/>
<dbReference type="Proteomes" id="UP000002301">
    <property type="component" value="Chromosome 1"/>
</dbReference>
<dbReference type="GO" id="GO:0015935">
    <property type="term" value="C:small ribosomal subunit"/>
    <property type="evidence" value="ECO:0007669"/>
    <property type="project" value="InterPro"/>
</dbReference>
<dbReference type="GO" id="GO:0019843">
    <property type="term" value="F:rRNA binding"/>
    <property type="evidence" value="ECO:0007669"/>
    <property type="project" value="UniProtKB-UniRule"/>
</dbReference>
<dbReference type="GO" id="GO:0003735">
    <property type="term" value="F:structural constituent of ribosome"/>
    <property type="evidence" value="ECO:0007669"/>
    <property type="project" value="InterPro"/>
</dbReference>
<dbReference type="GO" id="GO:0006412">
    <property type="term" value="P:translation"/>
    <property type="evidence" value="ECO:0007669"/>
    <property type="project" value="UniProtKB-UniRule"/>
</dbReference>
<dbReference type="FunFam" id="3.30.160.20:FF:000001">
    <property type="entry name" value="30S ribosomal protein S5"/>
    <property type="match status" value="1"/>
</dbReference>
<dbReference type="FunFam" id="3.30.230.10:FF:000002">
    <property type="entry name" value="30S ribosomal protein S5"/>
    <property type="match status" value="1"/>
</dbReference>
<dbReference type="Gene3D" id="3.30.160.20">
    <property type="match status" value="1"/>
</dbReference>
<dbReference type="Gene3D" id="3.30.230.10">
    <property type="match status" value="1"/>
</dbReference>
<dbReference type="HAMAP" id="MF_01307_B">
    <property type="entry name" value="Ribosomal_uS5_B"/>
    <property type="match status" value="1"/>
</dbReference>
<dbReference type="InterPro" id="IPR020568">
    <property type="entry name" value="Ribosomal_Su5_D2-typ_SF"/>
</dbReference>
<dbReference type="InterPro" id="IPR000851">
    <property type="entry name" value="Ribosomal_uS5"/>
</dbReference>
<dbReference type="InterPro" id="IPR005712">
    <property type="entry name" value="Ribosomal_uS5_bac-type"/>
</dbReference>
<dbReference type="InterPro" id="IPR005324">
    <property type="entry name" value="Ribosomal_uS5_C"/>
</dbReference>
<dbReference type="InterPro" id="IPR013810">
    <property type="entry name" value="Ribosomal_uS5_N"/>
</dbReference>
<dbReference type="InterPro" id="IPR018192">
    <property type="entry name" value="Ribosomal_uS5_N_CS"/>
</dbReference>
<dbReference type="InterPro" id="IPR014721">
    <property type="entry name" value="Ribsml_uS5_D2-typ_fold_subgr"/>
</dbReference>
<dbReference type="NCBIfam" id="TIGR01021">
    <property type="entry name" value="rpsE_bact"/>
    <property type="match status" value="1"/>
</dbReference>
<dbReference type="PANTHER" id="PTHR48277">
    <property type="entry name" value="MITOCHONDRIAL RIBOSOMAL PROTEIN S5"/>
    <property type="match status" value="1"/>
</dbReference>
<dbReference type="PANTHER" id="PTHR48277:SF1">
    <property type="entry name" value="MITOCHONDRIAL RIBOSOMAL PROTEIN S5"/>
    <property type="match status" value="1"/>
</dbReference>
<dbReference type="Pfam" id="PF00333">
    <property type="entry name" value="Ribosomal_S5"/>
    <property type="match status" value="1"/>
</dbReference>
<dbReference type="Pfam" id="PF03719">
    <property type="entry name" value="Ribosomal_S5_C"/>
    <property type="match status" value="1"/>
</dbReference>
<dbReference type="SUPFAM" id="SSF54768">
    <property type="entry name" value="dsRNA-binding domain-like"/>
    <property type="match status" value="1"/>
</dbReference>
<dbReference type="SUPFAM" id="SSF54211">
    <property type="entry name" value="Ribosomal protein S5 domain 2-like"/>
    <property type="match status" value="1"/>
</dbReference>
<dbReference type="PROSITE" id="PS00585">
    <property type="entry name" value="RIBOSOMAL_S5"/>
    <property type="match status" value="1"/>
</dbReference>
<dbReference type="PROSITE" id="PS50881">
    <property type="entry name" value="S5_DSRBD"/>
    <property type="match status" value="1"/>
</dbReference>
<keyword id="KW-1185">Reference proteome</keyword>
<keyword id="KW-0687">Ribonucleoprotein</keyword>
<keyword id="KW-0689">Ribosomal protein</keyword>
<keyword id="KW-0694">RNA-binding</keyword>
<keyword id="KW-0699">rRNA-binding</keyword>
<reference key="1">
    <citation type="journal article" date="2011" name="J. Bacteriol.">
        <title>Genome of Ochrobactrum anthropi ATCC 49188 T, a versatile opportunistic pathogen and symbiont of several eukaryotic hosts.</title>
        <authorList>
            <person name="Chain P.S."/>
            <person name="Lang D.M."/>
            <person name="Comerci D.J."/>
            <person name="Malfatti S.A."/>
            <person name="Vergez L.M."/>
            <person name="Shin M."/>
            <person name="Ugalde R.A."/>
            <person name="Garcia E."/>
            <person name="Tolmasky M.E."/>
        </authorList>
    </citation>
    <scope>NUCLEOTIDE SEQUENCE [LARGE SCALE GENOMIC DNA]</scope>
    <source>
        <strain>ATCC 49188 / DSM 6882 / CCUG 24695 / JCM 21032 / LMG 3331 / NBRC 15819 / NCTC 12168 / Alc 37</strain>
    </source>
</reference>
<sequence length="186" mass="20450">MAQRERNREDRGREERDSEFVDKLVHINRVAKVVKGGRRFGFAALVVVGDQKGRVGFGHGKAREVPEAIRKATEAAKRDMIFVPLRSGRTLHHDVEGRHGAGKVLLRAAPAGKGIIAGGPMRAVFETLGVQDVVAKSLGSSNPYNMVRATFDALKHQMHPKDIAAQRGIKYSTLQARRHDVVGSEE</sequence>
<organism>
    <name type="scientific">Brucella anthropi (strain ATCC 49188 / DSM 6882 / CCUG 24695 / JCM 21032 / LMG 3331 / NBRC 15819 / NCTC 12168 / Alc 37)</name>
    <name type="common">Ochrobactrum anthropi</name>
    <dbReference type="NCBI Taxonomy" id="439375"/>
    <lineage>
        <taxon>Bacteria</taxon>
        <taxon>Pseudomonadati</taxon>
        <taxon>Pseudomonadota</taxon>
        <taxon>Alphaproteobacteria</taxon>
        <taxon>Hyphomicrobiales</taxon>
        <taxon>Brucellaceae</taxon>
        <taxon>Brucella/Ochrobactrum group</taxon>
        <taxon>Brucella</taxon>
    </lineage>
</organism>
<feature type="chain" id="PRO_1000086033" description="Small ribosomal subunit protein uS5">
    <location>
        <begin position="1"/>
        <end position="186"/>
    </location>
</feature>
<feature type="domain" description="S5 DRBM" evidence="1">
    <location>
        <begin position="20"/>
        <end position="83"/>
    </location>
</feature>
<protein>
    <recommendedName>
        <fullName evidence="1">Small ribosomal subunit protein uS5</fullName>
    </recommendedName>
    <alternativeName>
        <fullName evidence="2">30S ribosomal protein S5</fullName>
    </alternativeName>
</protein>
<gene>
    <name evidence="1" type="primary">rpsE</name>
    <name type="ordered locus">Oant_1973</name>
</gene>